<proteinExistence type="evidence at protein level"/>
<comment type="function">
    <text evidence="1">Component of the cytochrome b6-f complex, which mediates electron transfer between photosystem II (PSII) and photosystem I (PSI), cyclic electron flow around PSI, and state transitions.</text>
</comment>
<comment type="cofactor">
    <cofactor evidence="1">
        <name>heme</name>
        <dbReference type="ChEBI" id="CHEBI:30413"/>
    </cofactor>
    <text evidence="1">Binds 1 heme group covalently.</text>
</comment>
<comment type="subunit">
    <text evidence="1">The 4 large subunits of the cytochrome b6-f complex are cytochrome b6, subunit IV (17 kDa polypeptide, PetD), cytochrome f and the Rieske protein, while the 4 small subunits are PetG, PetL, PetM and PetN. The complex functions as a dimer.</text>
</comment>
<comment type="subcellular location">
    <subcellularLocation>
        <location evidence="1">Cellular thylakoid membrane</location>
        <topology evidence="1">Single-pass membrane protein</topology>
    </subcellularLocation>
</comment>
<comment type="similarity">
    <text evidence="1">Belongs to the cytochrome f family.</text>
</comment>
<gene>
    <name evidence="1" type="primary">petA</name>
    <name type="ordered locus">all2452</name>
</gene>
<feature type="signal peptide" evidence="1">
    <location>
        <begin position="1"/>
        <end position="44"/>
    </location>
</feature>
<feature type="chain" id="PRO_0000023842" description="Cytochrome f">
    <location>
        <begin position="45"/>
        <end position="333"/>
    </location>
</feature>
<feature type="transmembrane region" description="Helical" evidence="1">
    <location>
        <begin position="299"/>
        <end position="318"/>
    </location>
</feature>
<feature type="binding site" description="axial binding residue" evidence="1">
    <location>
        <position position="45"/>
    </location>
    <ligand>
        <name>heme</name>
        <dbReference type="ChEBI" id="CHEBI:30413"/>
    </ligand>
    <ligandPart>
        <name>Fe</name>
        <dbReference type="ChEBI" id="CHEBI:18248"/>
    </ligandPart>
</feature>
<feature type="binding site" description="covalent" evidence="1">
    <location>
        <position position="66"/>
    </location>
    <ligand>
        <name>heme</name>
        <dbReference type="ChEBI" id="CHEBI:30413"/>
    </ligand>
</feature>
<feature type="binding site" description="covalent" evidence="1">
    <location>
        <position position="69"/>
    </location>
    <ligand>
        <name>heme</name>
        <dbReference type="ChEBI" id="CHEBI:30413"/>
    </ligand>
</feature>
<feature type="binding site" description="axial binding residue" evidence="1">
    <location>
        <position position="70"/>
    </location>
    <ligand>
        <name>heme</name>
        <dbReference type="ChEBI" id="CHEBI:30413"/>
    </ligand>
    <ligandPart>
        <name>Fe</name>
        <dbReference type="ChEBI" id="CHEBI:18248"/>
    </ligandPart>
</feature>
<feature type="helix" evidence="4">
    <location>
        <begin position="46"/>
        <end position="52"/>
    </location>
</feature>
<feature type="helix" evidence="4">
    <location>
        <begin position="65"/>
        <end position="68"/>
    </location>
</feature>
<feature type="strand" evidence="4">
    <location>
        <begin position="77"/>
        <end position="79"/>
    </location>
</feature>
<feature type="strand" evidence="4">
    <location>
        <begin position="82"/>
        <end position="84"/>
    </location>
</feature>
<feature type="strand" evidence="4">
    <location>
        <begin position="89"/>
        <end position="95"/>
    </location>
</feature>
<feature type="strand" evidence="4">
    <location>
        <begin position="109"/>
        <end position="112"/>
    </location>
</feature>
<feature type="strand" evidence="4">
    <location>
        <begin position="115"/>
        <end position="121"/>
    </location>
</feature>
<feature type="helix" evidence="4">
    <location>
        <begin position="131"/>
        <end position="133"/>
    </location>
</feature>
<feature type="helix" evidence="4">
    <location>
        <begin position="136"/>
        <end position="142"/>
    </location>
</feature>
<feature type="strand" evidence="4">
    <location>
        <begin position="148"/>
        <end position="151"/>
    </location>
</feature>
<feature type="strand" evidence="4">
    <location>
        <begin position="157"/>
        <end position="164"/>
    </location>
</feature>
<feature type="turn" evidence="4">
    <location>
        <begin position="165"/>
        <end position="167"/>
    </location>
</feature>
<feature type="strand" evidence="4">
    <location>
        <begin position="169"/>
        <end position="176"/>
    </location>
</feature>
<feature type="helix" evidence="4">
    <location>
        <begin position="180"/>
        <end position="182"/>
    </location>
</feature>
<feature type="strand" evidence="4">
    <location>
        <begin position="188"/>
        <end position="200"/>
    </location>
</feature>
<feature type="strand" evidence="4">
    <location>
        <begin position="212"/>
        <end position="214"/>
    </location>
</feature>
<feature type="strand" evidence="4">
    <location>
        <begin position="219"/>
        <end position="222"/>
    </location>
</feature>
<feature type="strand" evidence="4">
    <location>
        <begin position="232"/>
        <end position="236"/>
    </location>
</feature>
<feature type="strand" evidence="4">
    <location>
        <begin position="238"/>
        <end position="241"/>
    </location>
</feature>
<feature type="strand" evidence="3">
    <location>
        <begin position="246"/>
        <end position="248"/>
    </location>
</feature>
<feature type="strand" evidence="2">
    <location>
        <begin position="249"/>
        <end position="251"/>
    </location>
</feature>
<feature type="strand" evidence="4">
    <location>
        <begin position="253"/>
        <end position="259"/>
    </location>
</feature>
<feature type="strand" evidence="2">
    <location>
        <begin position="274"/>
        <end position="276"/>
    </location>
</feature>
<feature type="strand" evidence="4">
    <location>
        <begin position="283"/>
        <end position="293"/>
    </location>
</feature>
<feature type="helix" evidence="4">
    <location>
        <begin position="296"/>
        <end position="329"/>
    </location>
</feature>
<evidence type="ECO:0000255" key="1">
    <source>
        <dbReference type="HAMAP-Rule" id="MF_00610"/>
    </source>
</evidence>
<evidence type="ECO:0007829" key="2">
    <source>
        <dbReference type="PDB" id="1TU2"/>
    </source>
</evidence>
<evidence type="ECO:0007829" key="3">
    <source>
        <dbReference type="PDB" id="2ZT9"/>
    </source>
</evidence>
<evidence type="ECO:0007829" key="4">
    <source>
        <dbReference type="PDB" id="4OGQ"/>
    </source>
</evidence>
<name>CYF_NOSS1</name>
<organism>
    <name type="scientific">Nostoc sp. (strain PCC 7120 / SAG 25.82 / UTEX 2576)</name>
    <dbReference type="NCBI Taxonomy" id="103690"/>
    <lineage>
        <taxon>Bacteria</taxon>
        <taxon>Bacillati</taxon>
        <taxon>Cyanobacteriota</taxon>
        <taxon>Cyanophyceae</taxon>
        <taxon>Nostocales</taxon>
        <taxon>Nostocaceae</taxon>
        <taxon>Nostoc</taxon>
    </lineage>
</organism>
<dbReference type="EMBL" id="AJ319646">
    <property type="protein sequence ID" value="CAC39605.1"/>
    <property type="molecule type" value="Genomic_DNA"/>
</dbReference>
<dbReference type="EMBL" id="BA000019">
    <property type="protein sequence ID" value="BAB74151.1"/>
    <property type="molecule type" value="Genomic_DNA"/>
</dbReference>
<dbReference type="PIR" id="AE2112">
    <property type="entry name" value="AE2112"/>
</dbReference>
<dbReference type="RefSeq" id="WP_010996608.1">
    <property type="nucleotide sequence ID" value="NZ_RSCN01000002.1"/>
</dbReference>
<dbReference type="PDB" id="1TU2">
    <property type="method" value="NMR"/>
    <property type="chains" value="B=45-298"/>
</dbReference>
<dbReference type="PDB" id="2ZT9">
    <property type="method" value="X-ray"/>
    <property type="resolution" value="3.00 A"/>
    <property type="chains" value="C=45-333"/>
</dbReference>
<dbReference type="PDB" id="4H44">
    <property type="method" value="X-ray"/>
    <property type="resolution" value="2.70 A"/>
    <property type="chains" value="C=45-333"/>
</dbReference>
<dbReference type="PDB" id="4OGQ">
    <property type="method" value="X-ray"/>
    <property type="resolution" value="2.50 A"/>
    <property type="chains" value="C=1-333"/>
</dbReference>
<dbReference type="PDBsum" id="1TU2"/>
<dbReference type="PDBsum" id="2ZT9"/>
<dbReference type="PDBsum" id="4H44"/>
<dbReference type="PDBsum" id="4OGQ"/>
<dbReference type="SMR" id="Q93SW9"/>
<dbReference type="DIP" id="DIP-61002N"/>
<dbReference type="IntAct" id="Q93SW9">
    <property type="interactions" value="1"/>
</dbReference>
<dbReference type="STRING" id="103690.gene:10494482"/>
<dbReference type="TCDB" id="3.D.3.5.6">
    <property type="family name" value="the proton-translocating quinol:cytochrome c reductase (qcr) superfamily"/>
</dbReference>
<dbReference type="KEGG" id="ana:all2452"/>
<dbReference type="eggNOG" id="COG3258">
    <property type="taxonomic scope" value="Bacteria"/>
</dbReference>
<dbReference type="OrthoDB" id="581091at2"/>
<dbReference type="EvolutionaryTrace" id="Q93SW9"/>
<dbReference type="Proteomes" id="UP000002483">
    <property type="component" value="Chromosome"/>
</dbReference>
<dbReference type="GO" id="GO:0031676">
    <property type="term" value="C:plasma membrane-derived thylakoid membrane"/>
    <property type="evidence" value="ECO:0007669"/>
    <property type="project" value="UniProtKB-SubCell"/>
</dbReference>
<dbReference type="GO" id="GO:0009055">
    <property type="term" value="F:electron transfer activity"/>
    <property type="evidence" value="ECO:0007669"/>
    <property type="project" value="UniProtKB-UniRule"/>
</dbReference>
<dbReference type="GO" id="GO:0020037">
    <property type="term" value="F:heme binding"/>
    <property type="evidence" value="ECO:0007669"/>
    <property type="project" value="InterPro"/>
</dbReference>
<dbReference type="GO" id="GO:0005506">
    <property type="term" value="F:iron ion binding"/>
    <property type="evidence" value="ECO:0007669"/>
    <property type="project" value="InterPro"/>
</dbReference>
<dbReference type="GO" id="GO:0015979">
    <property type="term" value="P:photosynthesis"/>
    <property type="evidence" value="ECO:0007669"/>
    <property type="project" value="UniProtKB-UniRule"/>
</dbReference>
<dbReference type="FunFam" id="1.20.5.700:FF:000001">
    <property type="entry name" value="Cytochrome f"/>
    <property type="match status" value="1"/>
</dbReference>
<dbReference type="FunFam" id="2.60.40.830:FF:000001">
    <property type="entry name" value="Cytochrome f"/>
    <property type="match status" value="1"/>
</dbReference>
<dbReference type="Gene3D" id="2.40.50.100">
    <property type="match status" value="1"/>
</dbReference>
<dbReference type="Gene3D" id="2.60.40.830">
    <property type="entry name" value="Cytochrome f large domain"/>
    <property type="match status" value="1"/>
</dbReference>
<dbReference type="Gene3D" id="1.20.5.700">
    <property type="entry name" value="Single helix bin"/>
    <property type="match status" value="1"/>
</dbReference>
<dbReference type="HAMAP" id="MF_00610">
    <property type="entry name" value="Cytb6_f_cytF"/>
    <property type="match status" value="1"/>
</dbReference>
<dbReference type="InterPro" id="IPR024058">
    <property type="entry name" value="Cyt-f_TM"/>
</dbReference>
<dbReference type="InterPro" id="IPR002325">
    <property type="entry name" value="Cyt_f"/>
</dbReference>
<dbReference type="InterPro" id="IPR024094">
    <property type="entry name" value="Cyt_f_lg_dom"/>
</dbReference>
<dbReference type="InterPro" id="IPR036826">
    <property type="entry name" value="Cyt_f_lg_dom_sf"/>
</dbReference>
<dbReference type="InterPro" id="IPR011054">
    <property type="entry name" value="Rudment_hybrid_motif"/>
</dbReference>
<dbReference type="NCBIfam" id="NF002736">
    <property type="entry name" value="PRK02693.1"/>
    <property type="match status" value="1"/>
</dbReference>
<dbReference type="PANTHER" id="PTHR33288">
    <property type="match status" value="1"/>
</dbReference>
<dbReference type="PANTHER" id="PTHR33288:SF10">
    <property type="entry name" value="CYTOCHROME F"/>
    <property type="match status" value="1"/>
</dbReference>
<dbReference type="Pfam" id="PF01333">
    <property type="entry name" value="Apocytochr_F_C"/>
    <property type="match status" value="1"/>
</dbReference>
<dbReference type="Pfam" id="PF16639">
    <property type="entry name" value="Apocytochr_F_N"/>
    <property type="match status" value="1"/>
</dbReference>
<dbReference type="PRINTS" id="PR00610">
    <property type="entry name" value="CYTOCHROMEF"/>
</dbReference>
<dbReference type="SUPFAM" id="SSF103431">
    <property type="entry name" value="Cytochrome f subunit of the cytochrome b6f complex, transmembrane anchor"/>
    <property type="match status" value="1"/>
</dbReference>
<dbReference type="SUPFAM" id="SSF49441">
    <property type="entry name" value="Cytochrome f, large domain"/>
    <property type="match status" value="1"/>
</dbReference>
<dbReference type="SUPFAM" id="SSF51246">
    <property type="entry name" value="Rudiment single hybrid motif"/>
    <property type="match status" value="1"/>
</dbReference>
<dbReference type="PROSITE" id="PS51010">
    <property type="entry name" value="CYTF"/>
    <property type="match status" value="1"/>
</dbReference>
<protein>
    <recommendedName>
        <fullName evidence="1">Cytochrome f</fullName>
    </recommendedName>
</protein>
<reference key="1">
    <citation type="submission" date="2001-05" db="EMBL/GenBank/DDBJ databases">
        <title>b6f complex of Anabaena sp., possible function of alternative Rieske-FeS proteins.</title>
        <authorList>
            <person name="Arnold M."/>
        </authorList>
    </citation>
    <scope>NUCLEOTIDE SEQUENCE [GENOMIC DNA]</scope>
</reference>
<reference key="2">
    <citation type="journal article" date="2001" name="DNA Res.">
        <title>Complete genomic sequence of the filamentous nitrogen-fixing cyanobacterium Anabaena sp. strain PCC 7120.</title>
        <authorList>
            <person name="Kaneko T."/>
            <person name="Nakamura Y."/>
            <person name="Wolk C.P."/>
            <person name="Kuritz T."/>
            <person name="Sasamoto S."/>
            <person name="Watanabe A."/>
            <person name="Iriguchi M."/>
            <person name="Ishikawa A."/>
            <person name="Kawashima K."/>
            <person name="Kimura T."/>
            <person name="Kishida Y."/>
            <person name="Kohara M."/>
            <person name="Matsumoto M."/>
            <person name="Matsuno A."/>
            <person name="Muraki A."/>
            <person name="Nakazaki N."/>
            <person name="Shimpo S."/>
            <person name="Sugimoto M."/>
            <person name="Takazawa M."/>
            <person name="Yamada M."/>
            <person name="Yasuda M."/>
            <person name="Tabata S."/>
        </authorList>
    </citation>
    <scope>NUCLEOTIDE SEQUENCE [LARGE SCALE GENOMIC DNA]</scope>
    <source>
        <strain>PCC 7120 / SAG 25.82 / UTEX 2576</strain>
    </source>
</reference>
<sequence>MRNACTRARLTRTARAMVKTLFIAIASVTFFFTSDLALPQSAAAYPFWAQQTYPETPREPTGRIVCANCHLAAKPTEVEVPQSVLPDTVFKAVVKIPYDTSVQQVGADGSKVGLNVGAVLMLPEGFKIAPEDRIPEELKEEIGDVYFQPYGEDKDNIVIVGPLPGEQYQEIVFPVLSPNPANDKNIHFGKYSVHVGGNRGRGQVYPTGEKSNNNLYSAAATGTISKIAKQEGEDGSVKYLVDIKTESGEVVSDTIPAGPELIVSEGQAVTAGDALTNNPNVGGFGQLDAEIVLQDANRVGWLIAFVALVMLAQVMLVLKKKQVEKVQAAEMNF</sequence>
<accession>Q93SW9</accession>
<keyword id="KW-0002">3D-structure</keyword>
<keyword id="KW-0249">Electron transport</keyword>
<keyword id="KW-0349">Heme</keyword>
<keyword id="KW-0408">Iron</keyword>
<keyword id="KW-0472">Membrane</keyword>
<keyword id="KW-0479">Metal-binding</keyword>
<keyword id="KW-0602">Photosynthesis</keyword>
<keyword id="KW-1185">Reference proteome</keyword>
<keyword id="KW-0732">Signal</keyword>
<keyword id="KW-0793">Thylakoid</keyword>
<keyword id="KW-0812">Transmembrane</keyword>
<keyword id="KW-1133">Transmembrane helix</keyword>
<keyword id="KW-0813">Transport</keyword>